<comment type="function">
    <text evidence="1">Modifies, by uridylylation and deuridylylation, the PII regulatory proteins (GlnB and homologs), in response to the nitrogen status of the cell that GlnD senses through the glutamine level. Under low glutamine levels, catalyzes the conversion of the PII proteins and UTP to PII-UMP and PPi, while under higher glutamine levels, GlnD hydrolyzes PII-UMP to PII and UMP (deuridylylation). Thus, controls uridylylation state and activity of the PII proteins, and plays an important role in the regulation of nitrogen assimilation and metabolism.</text>
</comment>
<comment type="catalytic activity">
    <reaction evidence="1">
        <text>[protein-PII]-L-tyrosine + UTP = [protein-PII]-uridylyl-L-tyrosine + diphosphate</text>
        <dbReference type="Rhea" id="RHEA:13673"/>
        <dbReference type="Rhea" id="RHEA-COMP:12147"/>
        <dbReference type="Rhea" id="RHEA-COMP:12148"/>
        <dbReference type="ChEBI" id="CHEBI:33019"/>
        <dbReference type="ChEBI" id="CHEBI:46398"/>
        <dbReference type="ChEBI" id="CHEBI:46858"/>
        <dbReference type="ChEBI" id="CHEBI:90602"/>
        <dbReference type="EC" id="2.7.7.59"/>
    </reaction>
</comment>
<comment type="catalytic activity">
    <reaction evidence="1">
        <text>[protein-PII]-uridylyl-L-tyrosine + H2O = [protein-PII]-L-tyrosine + UMP + H(+)</text>
        <dbReference type="Rhea" id="RHEA:48600"/>
        <dbReference type="Rhea" id="RHEA-COMP:12147"/>
        <dbReference type="Rhea" id="RHEA-COMP:12148"/>
        <dbReference type="ChEBI" id="CHEBI:15377"/>
        <dbReference type="ChEBI" id="CHEBI:15378"/>
        <dbReference type="ChEBI" id="CHEBI:46858"/>
        <dbReference type="ChEBI" id="CHEBI:57865"/>
        <dbReference type="ChEBI" id="CHEBI:90602"/>
    </reaction>
</comment>
<comment type="cofactor">
    <cofactor evidence="1">
        <name>Mg(2+)</name>
        <dbReference type="ChEBI" id="CHEBI:18420"/>
    </cofactor>
</comment>
<comment type="activity regulation">
    <text evidence="1">Uridylyltransferase (UTase) activity is inhibited by glutamine, while glutamine activates uridylyl-removing (UR) activity.</text>
</comment>
<comment type="domain">
    <text evidence="1">Has four distinct domains: an N-terminal nucleotidyltransferase (NT) domain responsible for UTase activity, a central HD domain that encodes UR activity, and two C-terminal ACT domains that seem to have a role in glutamine sensing.</text>
</comment>
<comment type="similarity">
    <text evidence="1">Belongs to the GlnD family.</text>
</comment>
<dbReference type="EC" id="2.7.7.59" evidence="1"/>
<dbReference type="EC" id="3.1.4.-" evidence="1"/>
<dbReference type="EMBL" id="AE004969">
    <property type="protein sequence ID" value="AAW89512.1"/>
    <property type="molecule type" value="Genomic_DNA"/>
</dbReference>
<dbReference type="RefSeq" id="WP_010951127.1">
    <property type="nucleotide sequence ID" value="NC_002946.2"/>
</dbReference>
<dbReference type="RefSeq" id="YP_207924.1">
    <property type="nucleotide sequence ID" value="NC_002946.2"/>
</dbReference>
<dbReference type="SMR" id="Q5F8H5"/>
<dbReference type="STRING" id="242231.NGO_0798"/>
<dbReference type="KEGG" id="ngo:NGO_0798"/>
<dbReference type="PATRIC" id="fig|1028802.3.peg.764"/>
<dbReference type="HOGENOM" id="CLU_012833_0_0_4"/>
<dbReference type="Proteomes" id="UP000000535">
    <property type="component" value="Chromosome"/>
</dbReference>
<dbReference type="GO" id="GO:0008773">
    <property type="term" value="F:[protein-PII] uridylyltransferase activity"/>
    <property type="evidence" value="ECO:0007669"/>
    <property type="project" value="UniProtKB-UniRule"/>
</dbReference>
<dbReference type="GO" id="GO:0008081">
    <property type="term" value="F:phosphoric diester hydrolase activity"/>
    <property type="evidence" value="ECO:0007669"/>
    <property type="project" value="UniProtKB-UniRule"/>
</dbReference>
<dbReference type="GO" id="GO:0006808">
    <property type="term" value="P:regulation of nitrogen utilization"/>
    <property type="evidence" value="ECO:0007669"/>
    <property type="project" value="UniProtKB-UniRule"/>
</dbReference>
<dbReference type="CDD" id="cd04899">
    <property type="entry name" value="ACT_ACR-UUR-like_2"/>
    <property type="match status" value="1"/>
</dbReference>
<dbReference type="CDD" id="cd04900">
    <property type="entry name" value="ACT_UUR-like_1"/>
    <property type="match status" value="1"/>
</dbReference>
<dbReference type="CDD" id="cd00077">
    <property type="entry name" value="HDc"/>
    <property type="match status" value="1"/>
</dbReference>
<dbReference type="CDD" id="cd05401">
    <property type="entry name" value="NT_GlnE_GlnD_like"/>
    <property type="match status" value="1"/>
</dbReference>
<dbReference type="Gene3D" id="1.10.3210.10">
    <property type="entry name" value="Hypothetical protein af1432"/>
    <property type="match status" value="1"/>
</dbReference>
<dbReference type="Gene3D" id="1.20.120.330">
    <property type="entry name" value="Nucleotidyltransferases domain 2"/>
    <property type="match status" value="1"/>
</dbReference>
<dbReference type="HAMAP" id="MF_00277">
    <property type="entry name" value="PII_uridylyl_transf"/>
    <property type="match status" value="1"/>
</dbReference>
<dbReference type="InterPro" id="IPR045865">
    <property type="entry name" value="ACT-like_dom_sf"/>
</dbReference>
<dbReference type="InterPro" id="IPR002912">
    <property type="entry name" value="ACT_dom"/>
</dbReference>
<dbReference type="InterPro" id="IPR003607">
    <property type="entry name" value="HD/PDEase_dom"/>
</dbReference>
<dbReference type="InterPro" id="IPR006674">
    <property type="entry name" value="HD_domain"/>
</dbReference>
<dbReference type="InterPro" id="IPR043519">
    <property type="entry name" value="NT_sf"/>
</dbReference>
<dbReference type="InterPro" id="IPR013546">
    <property type="entry name" value="PII_UdlTrfase/GS_AdlTrfase"/>
</dbReference>
<dbReference type="InterPro" id="IPR010043">
    <property type="entry name" value="UTase/UR"/>
</dbReference>
<dbReference type="NCBIfam" id="TIGR01693">
    <property type="entry name" value="UTase_glnD"/>
    <property type="match status" value="1"/>
</dbReference>
<dbReference type="PANTHER" id="PTHR47320">
    <property type="entry name" value="BIFUNCTIONAL URIDYLYLTRANSFERASE/URIDYLYL-REMOVING ENZYME"/>
    <property type="match status" value="1"/>
</dbReference>
<dbReference type="PANTHER" id="PTHR47320:SF1">
    <property type="entry name" value="BIFUNCTIONAL URIDYLYLTRANSFERASE_URIDYLYL-REMOVING ENZYME"/>
    <property type="match status" value="1"/>
</dbReference>
<dbReference type="Pfam" id="PF08335">
    <property type="entry name" value="GlnD_UR_UTase"/>
    <property type="match status" value="1"/>
</dbReference>
<dbReference type="Pfam" id="PF01966">
    <property type="entry name" value="HD"/>
    <property type="match status" value="1"/>
</dbReference>
<dbReference type="PIRSF" id="PIRSF006288">
    <property type="entry name" value="PII_uridyltransf"/>
    <property type="match status" value="1"/>
</dbReference>
<dbReference type="SMART" id="SM00471">
    <property type="entry name" value="HDc"/>
    <property type="match status" value="1"/>
</dbReference>
<dbReference type="SUPFAM" id="SSF55021">
    <property type="entry name" value="ACT-like"/>
    <property type="match status" value="2"/>
</dbReference>
<dbReference type="SUPFAM" id="SSF109604">
    <property type="entry name" value="HD-domain/PDEase-like"/>
    <property type="match status" value="1"/>
</dbReference>
<dbReference type="SUPFAM" id="SSF81301">
    <property type="entry name" value="Nucleotidyltransferase"/>
    <property type="match status" value="1"/>
</dbReference>
<dbReference type="SUPFAM" id="SSF81593">
    <property type="entry name" value="Nucleotidyltransferase substrate binding subunit/domain"/>
    <property type="match status" value="1"/>
</dbReference>
<dbReference type="PROSITE" id="PS51671">
    <property type="entry name" value="ACT"/>
    <property type="match status" value="2"/>
</dbReference>
<dbReference type="PROSITE" id="PS51831">
    <property type="entry name" value="HD"/>
    <property type="match status" value="1"/>
</dbReference>
<evidence type="ECO:0000255" key="1">
    <source>
        <dbReference type="HAMAP-Rule" id="MF_00277"/>
    </source>
</evidence>
<evidence type="ECO:0000255" key="2">
    <source>
        <dbReference type="PROSITE-ProRule" id="PRU01175"/>
    </source>
</evidence>
<feature type="chain" id="PRO_0000192746" description="Bifunctional uridylyltransferase/uridylyl-removing enzyme">
    <location>
        <begin position="1"/>
        <end position="852"/>
    </location>
</feature>
<feature type="domain" description="HD" evidence="2">
    <location>
        <begin position="436"/>
        <end position="558"/>
    </location>
</feature>
<feature type="domain" description="ACT 1" evidence="1">
    <location>
        <begin position="673"/>
        <end position="757"/>
    </location>
</feature>
<feature type="domain" description="ACT 2" evidence="1">
    <location>
        <begin position="785"/>
        <end position="852"/>
    </location>
</feature>
<feature type="region of interest" description="Uridylyltransferase">
    <location>
        <begin position="1"/>
        <end position="318"/>
    </location>
</feature>
<feature type="region of interest" description="Uridylyl-removing">
    <location>
        <begin position="319"/>
        <end position="672"/>
    </location>
</feature>
<proteinExistence type="inferred from homology"/>
<organism>
    <name type="scientific">Neisseria gonorrhoeae (strain ATCC 700825 / FA 1090)</name>
    <dbReference type="NCBI Taxonomy" id="242231"/>
    <lineage>
        <taxon>Bacteria</taxon>
        <taxon>Pseudomonadati</taxon>
        <taxon>Pseudomonadota</taxon>
        <taxon>Betaproteobacteria</taxon>
        <taxon>Neisseriales</taxon>
        <taxon>Neisseriaceae</taxon>
        <taxon>Neisseria</taxon>
    </lineage>
</organism>
<reference key="1">
    <citation type="submission" date="2003-03" db="EMBL/GenBank/DDBJ databases">
        <title>The complete genome sequence of Neisseria gonorrhoeae.</title>
        <authorList>
            <person name="Lewis L.A."/>
            <person name="Gillaspy A.F."/>
            <person name="McLaughlin R.E."/>
            <person name="Gipson M."/>
            <person name="Ducey T.F."/>
            <person name="Ownbey T."/>
            <person name="Hartman K."/>
            <person name="Nydick C."/>
            <person name="Carson M.B."/>
            <person name="Vaughn J."/>
            <person name="Thomson C."/>
            <person name="Song L."/>
            <person name="Lin S."/>
            <person name="Yuan X."/>
            <person name="Najar F."/>
            <person name="Zhan M."/>
            <person name="Ren Q."/>
            <person name="Zhu H."/>
            <person name="Qi S."/>
            <person name="Kenton S.M."/>
            <person name="Lai H."/>
            <person name="White J.D."/>
            <person name="Clifton S."/>
            <person name="Roe B.A."/>
            <person name="Dyer D.W."/>
        </authorList>
    </citation>
    <scope>NUCLEOTIDE SEQUENCE [LARGE SCALE GENOMIC DNA]</scope>
    <source>
        <strain>ATCC 700825 / FA 1090</strain>
    </source>
</reference>
<accession>Q5F8H5</accession>
<protein>
    <recommendedName>
        <fullName evidence="1">Bifunctional uridylyltransferase/uridylyl-removing enzyme</fullName>
        <shortName evidence="1">UTase/UR</shortName>
    </recommendedName>
    <alternativeName>
        <fullName evidence="1">Bifunctional [protein-PII] modification enzyme</fullName>
    </alternativeName>
    <alternativeName>
        <fullName evidence="1">Bifunctional nitrogen sensor protein</fullName>
    </alternativeName>
    <domain>
        <recommendedName>
            <fullName evidence="1">[Protein-PII] uridylyltransferase</fullName>
            <shortName evidence="1">PII uridylyltransferase</shortName>
            <shortName evidence="1">UTase</shortName>
            <ecNumber evidence="1">2.7.7.59</ecNumber>
        </recommendedName>
    </domain>
    <domain>
        <recommendedName>
            <fullName evidence="1">[Protein-PII]-UMP uridylyl-removing enzyme</fullName>
            <shortName evidence="1">UR</shortName>
            <ecNumber evidence="1">3.1.4.-</ecNumber>
        </recommendedName>
    </domain>
</protein>
<keyword id="KW-0378">Hydrolase</keyword>
<keyword id="KW-0460">Magnesium</keyword>
<keyword id="KW-0511">Multifunctional enzyme</keyword>
<keyword id="KW-0548">Nucleotidyltransferase</keyword>
<keyword id="KW-1185">Reference proteome</keyword>
<keyword id="KW-0677">Repeat</keyword>
<keyword id="KW-0808">Transferase</keyword>
<sequence>MPENLSSALETFKQQRNAAEAHYLKANRVSVFFREYTAAVETLLAALWAEHFQNSALCLMAVGGFGRGEPYPCSDVDLAVVSPAPLSDGIQEQIARFIQTLWDCKLMPSVKSGSVDELCESVRDDITGDTAFLEARFLFGNRQTADELAEKMNVQRNVAAFIEAKLVEMEHRHAKSQGSGAVLEPNIKSCPGGLRDIHTLLWIAKAQGLAANLPDLLKQRILTRAEAGMLSHGYRRLAHIRIRLHLNAKRAEDRLLFDLQPQVAESMGYQDENRRRQSEELMRVFYRAVKTVKQLGGILTPMLRSRVSSTPVRVTLRIDDDYIQVNNQIAARHTDIFFRRPEHIFKIVEIMQQRNDITALEPQTLRAWWGATRKINRSFYQNSENRRRFAGFFRSGNGLTQTLRFLNLYGVLGRYLPAWEKIVGLLQHDLFHIYPVDDHILAVVRNVRRLALDMHSHELPYASALMQSFEKQDILYLAAFFHDIAKGRGGDHAVQGIADARQFAADHFLTEEESDLLAWLVENHLLMSAVAQKEDIQDPGVLDAFCKRVQTHERLSALYLLTISDIRGTNPKLWNAWRASLLESLFHAAGRCLAGNDGNPHALFGRRRQEAADLLTRAAVPEKQQKKLWNALGSAYFARHQSREILWHAANLVHDFEPPIVRSRILPQSDSFQVMVFMPNGPRLFARLCRIFSRHGFDILAARAFITEHDYILDTFIVQIPSQHAPEDYPDIQSALEAELNSFIHGHTVAETQSCNRRISRRSRYMPIAPSITITPEEDYPDRYSVEITAVNRPFLLADMAEVFFAHNVSLRYAKISTLDERVEDSFTVFSPDLKNPKIQSSLKQALLEQLA</sequence>
<gene>
    <name evidence="1" type="primary">glnD</name>
    <name type="ordered locus">NGO_0798</name>
</gene>
<name>GLND_NEIG1</name>